<name>VGF_RABPU</name>
<organism>
    <name type="scientific">Rabbitpox virus (strain Utrecht)</name>
    <name type="common">RPV</name>
    <dbReference type="NCBI Taxonomy" id="45417"/>
    <lineage>
        <taxon>Viruses</taxon>
        <taxon>Varidnaviria</taxon>
        <taxon>Bamfordvirae</taxon>
        <taxon>Nucleocytoviricota</taxon>
        <taxon>Pokkesviricetes</taxon>
        <taxon>Chitovirales</taxon>
        <taxon>Poxviridae</taxon>
        <taxon>Chordopoxvirinae</taxon>
        <taxon>Orthopoxvirus</taxon>
        <taxon>Vaccinia virus</taxon>
    </lineage>
</organism>
<dbReference type="EMBL" id="AY484669">
    <property type="protein sequence ID" value="AAS49719.1"/>
    <property type="molecule type" value="Genomic_DNA"/>
</dbReference>
<dbReference type="SMR" id="Q6RZT5"/>
<dbReference type="Proteomes" id="UP000166173">
    <property type="component" value="Segment"/>
</dbReference>
<dbReference type="GO" id="GO:0005576">
    <property type="term" value="C:extracellular region"/>
    <property type="evidence" value="ECO:0007669"/>
    <property type="project" value="UniProtKB-SubCell"/>
</dbReference>
<dbReference type="GO" id="GO:0005154">
    <property type="term" value="F:epidermal growth factor receptor binding"/>
    <property type="evidence" value="ECO:0007669"/>
    <property type="project" value="InterPro"/>
</dbReference>
<dbReference type="GO" id="GO:0008083">
    <property type="term" value="F:growth factor activity"/>
    <property type="evidence" value="ECO:0007669"/>
    <property type="project" value="UniProtKB-KW"/>
</dbReference>
<dbReference type="GO" id="GO:0007173">
    <property type="term" value="P:epidermal growth factor receptor signaling pathway"/>
    <property type="evidence" value="ECO:0007669"/>
    <property type="project" value="TreeGrafter"/>
</dbReference>
<dbReference type="GO" id="GO:0008284">
    <property type="term" value="P:positive regulation of cell population proliferation"/>
    <property type="evidence" value="ECO:0007669"/>
    <property type="project" value="TreeGrafter"/>
</dbReference>
<dbReference type="GO" id="GO:0045840">
    <property type="term" value="P:positive regulation of mitotic nuclear division"/>
    <property type="evidence" value="ECO:0007669"/>
    <property type="project" value="TreeGrafter"/>
</dbReference>
<dbReference type="Gene3D" id="2.10.25.10">
    <property type="entry name" value="Laminin"/>
    <property type="match status" value="1"/>
</dbReference>
<dbReference type="InterPro" id="IPR000742">
    <property type="entry name" value="EGF-like_dom"/>
</dbReference>
<dbReference type="InterPro" id="IPR011170">
    <property type="entry name" value="GF_C11R"/>
</dbReference>
<dbReference type="PANTHER" id="PTHR10740:SF14">
    <property type="entry name" value="EGF-LIKE DOMAIN-CONTAINING PROTEIN"/>
    <property type="match status" value="1"/>
</dbReference>
<dbReference type="PANTHER" id="PTHR10740">
    <property type="entry name" value="TRANSFORMING GROWTH FACTOR ALPHA"/>
    <property type="match status" value="1"/>
</dbReference>
<dbReference type="PIRSF" id="PIRSF001779">
    <property type="entry name" value="GF_C11R"/>
    <property type="match status" value="1"/>
</dbReference>
<dbReference type="PRINTS" id="PR00009">
    <property type="entry name" value="EGFTGF"/>
</dbReference>
<dbReference type="SUPFAM" id="SSF57196">
    <property type="entry name" value="EGF/Laminin"/>
    <property type="match status" value="1"/>
</dbReference>
<dbReference type="PROSITE" id="PS00022">
    <property type="entry name" value="EGF_1"/>
    <property type="match status" value="1"/>
</dbReference>
<dbReference type="PROSITE" id="PS01186">
    <property type="entry name" value="EGF_2"/>
    <property type="match status" value="1"/>
</dbReference>
<dbReference type="PROSITE" id="PS50026">
    <property type="entry name" value="EGF_3"/>
    <property type="match status" value="1"/>
</dbReference>
<gene>
    <name type="primary">OPG019</name>
    <name type="ordered locus">RPXV006</name>
</gene>
<sequence>MSMKYLMLLFAAMIIRSFADSGNAIETTLPEITNATTDIPAIRLCGPEGDGYCLHGDCIHARDIDGMYCRCSHGYTGIRCQHVVLVDYQRSEKPNTTTSYIPSPGIVLVLVGIIMCCLLSVYRFTRRTKLPIQDMVVP</sequence>
<evidence type="ECO:0000250" key="1">
    <source>
        <dbReference type="UniProtKB" id="P01136"/>
    </source>
</evidence>
<evidence type="ECO:0000255" key="2"/>
<evidence type="ECO:0000255" key="3">
    <source>
        <dbReference type="PROSITE-ProRule" id="PRU00076"/>
    </source>
</evidence>
<evidence type="ECO:0000305" key="4"/>
<reference key="1">
    <citation type="journal article" date="2005" name="J. Gen. Virol.">
        <title>Complete coding sequences of the rabbitpox virus genome.</title>
        <authorList>
            <person name="Li G."/>
            <person name="Chen N."/>
            <person name="Roper R.L."/>
            <person name="Feng Z."/>
            <person name="Hunter A.L."/>
            <person name="Danila M."/>
            <person name="Lefkowitz E.J."/>
            <person name="Buller R.M.L."/>
            <person name="Upton C."/>
        </authorList>
    </citation>
    <scope>NUCLEOTIDE SEQUENCE [LARGE SCALE GENOMIC DNA]</scope>
</reference>
<proteinExistence type="inferred from homology"/>
<comment type="function">
    <text evidence="1">Stimulates cellular proliferation (hyperplasia)and mobility around infected cells to promote rapid and efficient spread of infection.</text>
</comment>
<comment type="subcellular location">
    <subcellularLocation>
        <location evidence="1">Secreted</location>
    </subcellularLocation>
</comment>
<comment type="induction">
    <text evidence="1">Expressed in the early phase of the viral replicative cycle.</text>
</comment>
<comment type="similarity">
    <text evidence="4">Belongs to the orthopoxvirus OPG019 family.</text>
</comment>
<organismHost>
    <name type="scientific">Oryctolagus cuniculus</name>
    <name type="common">Rabbit</name>
    <dbReference type="NCBI Taxonomy" id="9986"/>
</organismHost>
<keyword id="KW-1015">Disulfide bond</keyword>
<keyword id="KW-0244">Early protein</keyword>
<keyword id="KW-0245">EGF-like domain</keyword>
<keyword id="KW-0325">Glycoprotein</keyword>
<keyword id="KW-0339">Growth factor</keyword>
<keyword id="KW-0964">Secreted</keyword>
<keyword id="KW-0732">Signal</keyword>
<accession>Q6RZT5</accession>
<feature type="signal peptide" evidence="2">
    <location>
        <begin position="1"/>
        <end position="19"/>
    </location>
</feature>
<feature type="chain" id="PRO_0000007604" description="Growth factor">
    <location>
        <begin position="20"/>
        <end position="138"/>
    </location>
</feature>
<feature type="domain" description="EGF-like" evidence="3">
    <location>
        <begin position="41"/>
        <end position="81"/>
    </location>
</feature>
<feature type="glycosylation site" description="N-linked (GlcNAc...) asparagine; by host" evidence="2">
    <location>
        <position position="34"/>
    </location>
</feature>
<feature type="glycosylation site" description="N-linked (GlcNAc...) asparagine; by host" evidence="2">
    <location>
        <position position="95"/>
    </location>
</feature>
<feature type="disulfide bond" evidence="3">
    <location>
        <begin position="45"/>
        <end position="58"/>
    </location>
</feature>
<feature type="disulfide bond" evidence="3">
    <location>
        <begin position="53"/>
        <end position="69"/>
    </location>
</feature>
<feature type="disulfide bond" evidence="3">
    <location>
        <begin position="71"/>
        <end position="80"/>
    </location>
</feature>
<protein>
    <recommendedName>
        <fullName>Growth factor</fullName>
    </recommendedName>
    <alternativeName>
        <fullName>Secreted epidermal growth factor-like</fullName>
    </alternativeName>
</protein>